<protein>
    <recommendedName>
        <fullName evidence="11">Diamine acetyltransferase 1</fullName>
        <ecNumber evidence="4 5 7">2.3.1.57</ecNumber>
    </recommendedName>
    <alternativeName>
        <fullName evidence="11">Polyamine N-acetyltransferase 1</fullName>
    </alternativeName>
    <alternativeName>
        <fullName evidence="9">Putrescine acetyltransferase</fullName>
    </alternativeName>
    <alternativeName>
        <fullName evidence="8 10">Spermidine/spermine N(1)-acetyltransferase 1</fullName>
        <shortName evidence="8 10">SSAT</shortName>
        <shortName>SSAT-1</shortName>
    </alternativeName>
</protein>
<organism>
    <name type="scientific">Homo sapiens</name>
    <name type="common">Human</name>
    <dbReference type="NCBI Taxonomy" id="9606"/>
    <lineage>
        <taxon>Eukaryota</taxon>
        <taxon>Metazoa</taxon>
        <taxon>Chordata</taxon>
        <taxon>Craniata</taxon>
        <taxon>Vertebrata</taxon>
        <taxon>Euteleostomi</taxon>
        <taxon>Mammalia</taxon>
        <taxon>Eutheria</taxon>
        <taxon>Euarchontoglires</taxon>
        <taxon>Primates</taxon>
        <taxon>Haplorrhini</taxon>
        <taxon>Catarrhini</taxon>
        <taxon>Hominidae</taxon>
        <taxon>Homo</taxon>
    </lineage>
</organism>
<keyword id="KW-0002">3D-structure</keyword>
<keyword id="KW-0012">Acyltransferase</keyword>
<keyword id="KW-0963">Cytoplasm</keyword>
<keyword id="KW-0903">Direct protein sequencing</keyword>
<keyword id="KW-1267">Proteomics identification</keyword>
<keyword id="KW-1185">Reference proteome</keyword>
<keyword id="KW-0808">Transferase</keyword>
<proteinExistence type="evidence at protein level"/>
<feature type="chain" id="PRO_0000074591" description="Diamine acetyltransferase 1">
    <location>
        <begin position="1"/>
        <end position="171"/>
    </location>
</feature>
<feature type="domain" description="N-acetyltransferase" evidence="2">
    <location>
        <begin position="4"/>
        <end position="171"/>
    </location>
</feature>
<feature type="active site" description="Proton donor" evidence="1">
    <location>
        <position position="140"/>
    </location>
</feature>
<feature type="binding site" evidence="12">
    <location>
        <begin position="27"/>
        <end position="28"/>
    </location>
    <ligand>
        <name>substrate</name>
    </ligand>
</feature>
<feature type="binding site" evidence="12">
    <location>
        <position position="92"/>
    </location>
    <ligand>
        <name>substrate</name>
    </ligand>
</feature>
<feature type="binding site" evidence="12">
    <location>
        <begin position="94"/>
        <end position="96"/>
    </location>
    <ligand>
        <name>acetyl-CoA</name>
        <dbReference type="ChEBI" id="CHEBI:57288"/>
    </ligand>
</feature>
<feature type="binding site" evidence="12">
    <location>
        <begin position="102"/>
        <end position="107"/>
    </location>
    <ligand>
        <name>acetyl-CoA</name>
        <dbReference type="ChEBI" id="CHEBI:57288"/>
    </ligand>
</feature>
<feature type="binding site" evidence="12">
    <location>
        <begin position="126"/>
        <end position="128"/>
    </location>
    <ligand>
        <name>substrate</name>
    </ligand>
</feature>
<feature type="binding site" evidence="12">
    <location>
        <begin position="133"/>
        <end position="136"/>
    </location>
    <ligand>
        <name>acetyl-CoA</name>
        <dbReference type="ChEBI" id="CHEBI:57288"/>
    </ligand>
</feature>
<feature type="binding site" evidence="12">
    <location>
        <begin position="140"/>
        <end position="143"/>
    </location>
    <ligand>
        <name>acetyl-CoA</name>
        <dbReference type="ChEBI" id="CHEBI:57288"/>
    </ligand>
</feature>
<feature type="binding site" evidence="12">
    <location>
        <position position="152"/>
    </location>
    <ligand>
        <name>substrate</name>
    </ligand>
</feature>
<feature type="mutagenesis site" description="Reduces activity by 95%." evidence="5">
    <original>Y</original>
    <variation>F</variation>
    <location>
        <position position="140"/>
    </location>
</feature>
<feature type="sequence conflict" description="In Ref. 3; CAA78509 and 4; AAA98854." evidence="11" ref="3 4">
    <original>K</original>
    <variation>E</variation>
    <location>
        <position position="26"/>
    </location>
</feature>
<feature type="sequence conflict" description="In Ref. 10; AA sequence." evidence="11" ref="10">
    <original>H</original>
    <variation>G</variation>
    <location>
        <position position="69"/>
    </location>
</feature>
<feature type="sequence conflict" description="In Ref. 10; AA sequence." evidence="11" ref="10">
    <original>W</original>
    <variation>P</variation>
    <location>
        <position position="84"/>
    </location>
</feature>
<feature type="strand" evidence="16">
    <location>
        <begin position="5"/>
        <end position="8"/>
    </location>
</feature>
<feature type="helix" evidence="16">
    <location>
        <begin position="11"/>
        <end position="13"/>
    </location>
</feature>
<feature type="helix" evidence="16">
    <location>
        <begin position="14"/>
        <end position="25"/>
    </location>
</feature>
<feature type="strand" evidence="17">
    <location>
        <begin position="28"/>
        <end position="30"/>
    </location>
</feature>
<feature type="helix" evidence="16">
    <location>
        <begin position="31"/>
        <end position="33"/>
    </location>
</feature>
<feature type="helix" evidence="16">
    <location>
        <begin position="38"/>
        <end position="45"/>
    </location>
</feature>
<feature type="strand" evidence="16">
    <location>
        <begin position="46"/>
        <end position="49"/>
    </location>
</feature>
<feature type="strand" evidence="16">
    <location>
        <begin position="53"/>
        <end position="58"/>
    </location>
</feature>
<feature type="helix" evidence="16">
    <location>
        <begin position="61"/>
        <end position="63"/>
    </location>
</feature>
<feature type="strand" evidence="16">
    <location>
        <begin position="71"/>
        <end position="82"/>
    </location>
</feature>
<feature type="turn" evidence="16">
    <location>
        <begin position="83"/>
        <end position="85"/>
    </location>
</feature>
<feature type="strand" evidence="16">
    <location>
        <begin position="86"/>
        <end position="96"/>
    </location>
</feature>
<feature type="helix" evidence="16">
    <location>
        <begin position="98"/>
        <end position="100"/>
    </location>
</feature>
<feature type="strand" evidence="16">
    <location>
        <begin position="102"/>
        <end position="104"/>
    </location>
</feature>
<feature type="helix" evidence="16">
    <location>
        <begin position="105"/>
        <end position="120"/>
    </location>
</feature>
<feature type="strand" evidence="16">
    <location>
        <begin position="123"/>
        <end position="130"/>
    </location>
</feature>
<feature type="helix" evidence="16">
    <location>
        <begin position="134"/>
        <end position="141"/>
    </location>
</feature>
<feature type="turn" evidence="16">
    <location>
        <begin position="142"/>
        <end position="144"/>
    </location>
</feature>
<feature type="helix" evidence="16">
    <location>
        <begin position="148"/>
        <end position="152"/>
    </location>
</feature>
<feature type="strand" evidence="16">
    <location>
        <begin position="154"/>
        <end position="160"/>
    </location>
</feature>
<feature type="helix" evidence="16">
    <location>
        <begin position="161"/>
        <end position="168"/>
    </location>
</feature>
<accession>P21673</accession>
<accession>Q6ICU9</accession>
<reference key="1">
    <citation type="journal article" date="1991" name="J. Biol. Chem.">
        <title>Isolation and characterization of a cDNA clone that codes for human spermidine/spermine N1-acetyltransferase.</title>
        <authorList>
            <person name="Casero R.A. Jr."/>
            <person name="Celano P."/>
            <person name="Ervin S.J."/>
            <person name="Applegren N.B."/>
            <person name="Wiest L."/>
            <person name="Pegg A.E."/>
        </authorList>
    </citation>
    <scope>NUCLEOTIDE SEQUENCE [MRNA]</scope>
</reference>
<reference key="2">
    <citation type="journal article" date="1991" name="Biochem. Biophys. Res. Commun.">
        <title>Characterization of a full-length cDNA which codes for the human spermidine/spermine N1-acetyltransferase.</title>
        <authorList>
            <person name="Xiao L."/>
            <person name="Celano P."/>
            <person name="Mank A.R."/>
            <person name="Pegg A.E."/>
            <person name="Casero R.A. Jr."/>
        </authorList>
    </citation>
    <scope>NUCLEOTIDE SEQUENCE [MRNA]</scope>
    <source>
        <tissue>Lung</tissue>
    </source>
</reference>
<reference key="3">
    <citation type="journal article" date="1992" name="Biochem. Biophys. Res. Commun.">
        <title>Structure of the human spermidine/spermine N1-acetyltransferase gene (exon/intron gene organization and localization to Xp22.1).</title>
        <authorList>
            <person name="Xiao L."/>
            <person name="Celano P."/>
            <person name="Mank A.R."/>
            <person name="Griffin C."/>
            <person name="Wang J.E."/>
            <person name="Casero R.A. Jr."/>
        </authorList>
    </citation>
    <scope>NUCLEOTIDE SEQUENCE [GENOMIC DNA]</scope>
</reference>
<reference key="4">
    <citation type="journal article" date="1996" name="Biochem. J.">
        <title>Differential transcription of the human spermidine/spermine N1-acetyltransferase (SSAT) gene in human lung carcinoma cells.</title>
        <authorList>
            <person name="Xiao L."/>
            <person name="Casero R.A. Jr."/>
        </authorList>
    </citation>
    <scope>NUCLEOTIDE SEQUENCE [GENOMIC DNA]</scope>
</reference>
<reference key="5">
    <citation type="submission" date="2003-05" db="EMBL/GenBank/DDBJ databases">
        <title>Cloning of human full-length CDSs in BD Creator(TM) system donor vector.</title>
        <authorList>
            <person name="Kalnine N."/>
            <person name="Chen X."/>
            <person name="Rolfs A."/>
            <person name="Halleck A."/>
            <person name="Hines L."/>
            <person name="Eisenstein S."/>
            <person name="Koundinya M."/>
            <person name="Raphael J."/>
            <person name="Moreira D."/>
            <person name="Kelley T."/>
            <person name="LaBaer J."/>
            <person name="Lin Y."/>
            <person name="Phelan M."/>
            <person name="Farmer A."/>
        </authorList>
    </citation>
    <scope>NUCLEOTIDE SEQUENCE [LARGE SCALE MRNA]</scope>
</reference>
<reference key="6">
    <citation type="submission" date="2004-05" db="EMBL/GenBank/DDBJ databases">
        <title>Cloning of human full open reading frames in Gateway(TM) system entry vector (pDONR201).</title>
        <authorList>
            <person name="Ebert L."/>
            <person name="Schick M."/>
            <person name="Neubert P."/>
            <person name="Schatten R."/>
            <person name="Henze S."/>
            <person name="Korn B."/>
        </authorList>
    </citation>
    <scope>NUCLEOTIDE SEQUENCE [LARGE SCALE MRNA]</scope>
</reference>
<reference key="7">
    <citation type="journal article" date="2004" name="Nat. Genet.">
        <title>Complete sequencing and characterization of 21,243 full-length human cDNAs.</title>
        <authorList>
            <person name="Ota T."/>
            <person name="Suzuki Y."/>
            <person name="Nishikawa T."/>
            <person name="Otsuki T."/>
            <person name="Sugiyama T."/>
            <person name="Irie R."/>
            <person name="Wakamatsu A."/>
            <person name="Hayashi K."/>
            <person name="Sato H."/>
            <person name="Nagai K."/>
            <person name="Kimura K."/>
            <person name="Makita H."/>
            <person name="Sekine M."/>
            <person name="Obayashi M."/>
            <person name="Nishi T."/>
            <person name="Shibahara T."/>
            <person name="Tanaka T."/>
            <person name="Ishii S."/>
            <person name="Yamamoto J."/>
            <person name="Saito K."/>
            <person name="Kawai Y."/>
            <person name="Isono Y."/>
            <person name="Nakamura Y."/>
            <person name="Nagahari K."/>
            <person name="Murakami K."/>
            <person name="Yasuda T."/>
            <person name="Iwayanagi T."/>
            <person name="Wagatsuma M."/>
            <person name="Shiratori A."/>
            <person name="Sudo H."/>
            <person name="Hosoiri T."/>
            <person name="Kaku Y."/>
            <person name="Kodaira H."/>
            <person name="Kondo H."/>
            <person name="Sugawara M."/>
            <person name="Takahashi M."/>
            <person name="Kanda K."/>
            <person name="Yokoi T."/>
            <person name="Furuya T."/>
            <person name="Kikkawa E."/>
            <person name="Omura Y."/>
            <person name="Abe K."/>
            <person name="Kamihara K."/>
            <person name="Katsuta N."/>
            <person name="Sato K."/>
            <person name="Tanikawa M."/>
            <person name="Yamazaki M."/>
            <person name="Ninomiya K."/>
            <person name="Ishibashi T."/>
            <person name="Yamashita H."/>
            <person name="Murakawa K."/>
            <person name="Fujimori K."/>
            <person name="Tanai H."/>
            <person name="Kimata M."/>
            <person name="Watanabe M."/>
            <person name="Hiraoka S."/>
            <person name="Chiba Y."/>
            <person name="Ishida S."/>
            <person name="Ono Y."/>
            <person name="Takiguchi S."/>
            <person name="Watanabe S."/>
            <person name="Yosida M."/>
            <person name="Hotuta T."/>
            <person name="Kusano J."/>
            <person name="Kanehori K."/>
            <person name="Takahashi-Fujii A."/>
            <person name="Hara H."/>
            <person name="Tanase T.-O."/>
            <person name="Nomura Y."/>
            <person name="Togiya S."/>
            <person name="Komai F."/>
            <person name="Hara R."/>
            <person name="Takeuchi K."/>
            <person name="Arita M."/>
            <person name="Imose N."/>
            <person name="Musashino K."/>
            <person name="Yuuki H."/>
            <person name="Oshima A."/>
            <person name="Sasaki N."/>
            <person name="Aotsuka S."/>
            <person name="Yoshikawa Y."/>
            <person name="Matsunawa H."/>
            <person name="Ichihara T."/>
            <person name="Shiohata N."/>
            <person name="Sano S."/>
            <person name="Moriya S."/>
            <person name="Momiyama H."/>
            <person name="Satoh N."/>
            <person name="Takami S."/>
            <person name="Terashima Y."/>
            <person name="Suzuki O."/>
            <person name="Nakagawa S."/>
            <person name="Senoh A."/>
            <person name="Mizoguchi H."/>
            <person name="Goto Y."/>
            <person name="Shimizu F."/>
            <person name="Wakebe H."/>
            <person name="Hishigaki H."/>
            <person name="Watanabe T."/>
            <person name="Sugiyama A."/>
            <person name="Takemoto M."/>
            <person name="Kawakami B."/>
            <person name="Yamazaki M."/>
            <person name="Watanabe K."/>
            <person name="Kumagai A."/>
            <person name="Itakura S."/>
            <person name="Fukuzumi Y."/>
            <person name="Fujimori Y."/>
            <person name="Komiyama M."/>
            <person name="Tashiro H."/>
            <person name="Tanigami A."/>
            <person name="Fujiwara T."/>
            <person name="Ono T."/>
            <person name="Yamada K."/>
            <person name="Fujii Y."/>
            <person name="Ozaki K."/>
            <person name="Hirao M."/>
            <person name="Ohmori Y."/>
            <person name="Kawabata A."/>
            <person name="Hikiji T."/>
            <person name="Kobatake N."/>
            <person name="Inagaki H."/>
            <person name="Ikema Y."/>
            <person name="Okamoto S."/>
            <person name="Okitani R."/>
            <person name="Kawakami T."/>
            <person name="Noguchi S."/>
            <person name="Itoh T."/>
            <person name="Shigeta K."/>
            <person name="Senba T."/>
            <person name="Matsumura K."/>
            <person name="Nakajima Y."/>
            <person name="Mizuno T."/>
            <person name="Morinaga M."/>
            <person name="Sasaki M."/>
            <person name="Togashi T."/>
            <person name="Oyama M."/>
            <person name="Hata H."/>
            <person name="Watanabe M."/>
            <person name="Komatsu T."/>
            <person name="Mizushima-Sugano J."/>
            <person name="Satoh T."/>
            <person name="Shirai Y."/>
            <person name="Takahashi Y."/>
            <person name="Nakagawa K."/>
            <person name="Okumura K."/>
            <person name="Nagase T."/>
            <person name="Nomura N."/>
            <person name="Kikuchi H."/>
            <person name="Masuho Y."/>
            <person name="Yamashita R."/>
            <person name="Nakai K."/>
            <person name="Yada T."/>
            <person name="Nakamura Y."/>
            <person name="Ohara O."/>
            <person name="Isogai T."/>
            <person name="Sugano S."/>
        </authorList>
    </citation>
    <scope>NUCLEOTIDE SEQUENCE [LARGE SCALE MRNA]</scope>
    <source>
        <tissue>Thalamus</tissue>
    </source>
</reference>
<reference key="8">
    <citation type="submission" date="2005-07" db="EMBL/GenBank/DDBJ databases">
        <authorList>
            <person name="Mural R.J."/>
            <person name="Istrail S."/>
            <person name="Sutton G.G."/>
            <person name="Florea L."/>
            <person name="Halpern A.L."/>
            <person name="Mobarry C.M."/>
            <person name="Lippert R."/>
            <person name="Walenz B."/>
            <person name="Shatkay H."/>
            <person name="Dew I."/>
            <person name="Miller J.R."/>
            <person name="Flanigan M.J."/>
            <person name="Edwards N.J."/>
            <person name="Bolanos R."/>
            <person name="Fasulo D."/>
            <person name="Halldorsson B.V."/>
            <person name="Hannenhalli S."/>
            <person name="Turner R."/>
            <person name="Yooseph S."/>
            <person name="Lu F."/>
            <person name="Nusskern D.R."/>
            <person name="Shue B.C."/>
            <person name="Zheng X.H."/>
            <person name="Zhong F."/>
            <person name="Delcher A.L."/>
            <person name="Huson D.H."/>
            <person name="Kravitz S.A."/>
            <person name="Mouchard L."/>
            <person name="Reinert K."/>
            <person name="Remington K.A."/>
            <person name="Clark A.G."/>
            <person name="Waterman M.S."/>
            <person name="Eichler E.E."/>
            <person name="Adams M.D."/>
            <person name="Hunkapiller M.W."/>
            <person name="Myers E.W."/>
            <person name="Venter J.C."/>
        </authorList>
    </citation>
    <scope>NUCLEOTIDE SEQUENCE [LARGE SCALE GENOMIC DNA]</scope>
</reference>
<reference key="9">
    <citation type="journal article" date="2004" name="Genome Res.">
        <title>The status, quality, and expansion of the NIH full-length cDNA project: the Mammalian Gene Collection (MGC).</title>
        <authorList>
            <consortium name="The MGC Project Team"/>
        </authorList>
    </citation>
    <scope>NUCLEOTIDE SEQUENCE [LARGE SCALE MRNA]</scope>
    <source>
        <tissue>Bone marrow</tissue>
        <tissue>Skin</tissue>
    </source>
</reference>
<reference key="10">
    <citation type="journal article" date="1990" name="Biochem. J.">
        <title>High specific induction of spermidine/spermine N1-acetyltransferase in a human large cell lung carcinoma.</title>
        <authorList>
            <person name="Casero R.A. Jr."/>
            <person name="Celano P."/>
            <person name="Ervin S.J."/>
            <person name="Wiest L."/>
            <person name="Pegg A.E."/>
        </authorList>
    </citation>
    <scope>PARTIAL PROTEIN SEQUENCE</scope>
    <scope>SUBCELLULAR LOCATION</scope>
</reference>
<reference key="11">
    <citation type="journal article" date="2004" name="Biochem. J.">
        <title>Spermidine/spermine-N1-acetyltransferase-2 (SSAT2) acetylates thialysine and is not involved in polyamine metabolism.</title>
        <authorList>
            <person name="Coleman C.S."/>
            <person name="Stanley B.A."/>
            <person name="Jones A.D."/>
            <person name="Pegg A.E."/>
        </authorList>
    </citation>
    <scope>FUNCTION</scope>
    <scope>CATALYTIC ACTIVITY</scope>
    <scope>BIOPHYSICOCHEMICAL PROPERTIES</scope>
</reference>
<reference key="12">
    <citation type="journal article" date="2006" name="Proc. Natl. Acad. Sci. U.S.A.">
        <title>Structures of wild-type and mutant human spermidine/spermine N1-acetyltransferase, a potential therapeutic drug target.</title>
        <authorList>
            <person name="Bewley M.C."/>
            <person name="Graziano V."/>
            <person name="Jiang J."/>
            <person name="Matz E."/>
            <person name="Studier F.W."/>
            <person name="Pegg A.E."/>
            <person name="Coleman C.S."/>
            <person name="Flanagan J.M."/>
        </authorList>
    </citation>
    <scope>X-RAY CRYSTALLOGRAPHY (1.7 ANGSTROMS) IN COMPLEXES WITH ACETYL-COENZYME A; THE SUBSTRATES SPERMINE AND N1,N11-BIS-(ETHYL)-NORSPERMINE</scope>
    <scope>MUTAGENESIS OF TYR-140</scope>
    <scope>CATALYTIC ACTIVITY</scope>
    <scope>SUBUNIT</scope>
</reference>
<reference key="13">
    <citation type="journal article" date="2007" name="Biochemistry">
        <title>Mechanistic and structural analysis of human spermidine/spermine N1-acetyltransferase.</title>
        <authorList>
            <person name="Hegde S.S."/>
            <person name="Chandler J."/>
            <person name="Vetting M.W."/>
            <person name="Yu M."/>
            <person name="Blanchard J.S."/>
        </authorList>
    </citation>
    <scope>X-RAY CRYSTALLOGRAPHY (2.3 ANGSTROMS) IN COMPLEX WITH THE SUBSTRATE AND ACETYL-COA ANALOG N1-SPERMINE-ACETYL-COENZYME A</scope>
    <scope>BIOPHYSICOCHEMICAL PROPERTIES</scope>
    <scope>CATALYTIC ACTIVITY</scope>
    <scope>FUNCTION</scope>
</reference>
<reference key="14">
    <citation type="journal article" date="2006" name="Proteins">
        <title>Crystal structure of human spermidine/spermine N1-acetyltransferase (hSSAT): the first structure of a new sequence family of transferase homologous superfamily.</title>
        <authorList>
            <person name="Zhu Y.-Q."/>
            <person name="Zhu D.-Y."/>
            <person name="Yin L."/>
            <person name="Zhang Y."/>
            <person name="Vonrhein C."/>
            <person name="Wang D.-C."/>
        </authorList>
    </citation>
    <scope>X-RAY CRYSTALLOGRAPHY (1.8 ANGSTROMS)</scope>
    <scope>SUBUNIT</scope>
</reference>
<reference key="15">
    <citation type="journal article" date="2002" name="Hum. Genet.">
        <title>Gene dosage of the spermidine/spermine N(1)-acetyltransferase (SSAT) gene with putrescine accumulation in a patient with a Xp21.1p22.12 duplication and keratosis follicularis spinulosa decalvans (KFSD).</title>
        <authorList>
            <person name="Gimelli G."/>
            <person name="Giglio S."/>
            <person name="Zuffardi O."/>
            <person name="Alhonen L."/>
            <person name="Suppola S."/>
            <person name="Cusano R."/>
            <person name="Lo Nigro C."/>
            <person name="Gatti R."/>
            <person name="Ravazzolo R."/>
            <person name="Seri M."/>
        </authorList>
    </citation>
    <scope>POSSIBLE INVOLVEMENT IN KERATOSIS FOLLICULARIS SPINULOSA DECALVANS</scope>
</reference>
<name>SAT1_HUMAN</name>
<sequence length="171" mass="20024">MAKFVIRPATAADCSDILRLIKELAKYEYMEEQVILTEKDLLEDGFGEHPFYHCLVAEVPKEHWTPEGHSIVGFAMYYFTYDPWIGKLLYLEDFFVMSDYRGFGIGSEILKNLSQVAMRCRCSSMHFLVAEWNEPSINFYKRRGASDLSSEEGWRLFKIDKEYLLKMATEE</sequence>
<comment type="function">
    <text evidence="4 5 7">Enzyme which catalyzes the acetylation of polyamines (PubMed:15283699, PubMed:16455797, PubMed:17516632). Substrate specificity: norspermidine = spermidine &gt;&gt; spermine &gt; N(1)-acetylspermine (PubMed:17516632). This highly regulated enzyme allows a fine attenuation of the intracellular concentration of polyamines (PubMed:16455797). Also involved in the regulation of polyamine transport out of cells (PubMed:16455797). Also acts on 1,3-diaminopropane and 1,5-diaminopentane (PubMed:16455797, PubMed:17516632).</text>
</comment>
<comment type="catalytic activity">
    <reaction evidence="4 5 7">
        <text>an alkane-alpha,omega-diamine + acetyl-CoA = an N-acetylalkane-alpha,omega-diamine + CoA + H(+)</text>
        <dbReference type="Rhea" id="RHEA:11116"/>
        <dbReference type="Rhea" id="RHEA-COMP:9766"/>
        <dbReference type="Rhea" id="RHEA-COMP:9767"/>
        <dbReference type="ChEBI" id="CHEBI:15378"/>
        <dbReference type="ChEBI" id="CHEBI:57287"/>
        <dbReference type="ChEBI" id="CHEBI:57288"/>
        <dbReference type="ChEBI" id="CHEBI:70977"/>
        <dbReference type="ChEBI" id="CHEBI:70988"/>
        <dbReference type="EC" id="2.3.1.57"/>
    </reaction>
    <physiologicalReaction direction="left-to-right" evidence="4 5 7">
        <dbReference type="Rhea" id="RHEA:11117"/>
    </physiologicalReaction>
</comment>
<comment type="catalytic activity">
    <reaction evidence="4 7">
        <text>spermidine + acetyl-CoA = N(1)-acetylspermidine + CoA + H(+)</text>
        <dbReference type="Rhea" id="RHEA:28150"/>
        <dbReference type="ChEBI" id="CHEBI:15378"/>
        <dbReference type="ChEBI" id="CHEBI:57287"/>
        <dbReference type="ChEBI" id="CHEBI:57288"/>
        <dbReference type="ChEBI" id="CHEBI:57834"/>
        <dbReference type="ChEBI" id="CHEBI:58324"/>
        <dbReference type="EC" id="2.3.1.57"/>
    </reaction>
    <physiologicalReaction direction="left-to-right" evidence="4 7">
        <dbReference type="Rhea" id="RHEA:28151"/>
    </physiologicalReaction>
</comment>
<comment type="catalytic activity">
    <reaction evidence="4 7">
        <text>spermine + acetyl-CoA = N(1)-acetylspermine + CoA + H(+)</text>
        <dbReference type="Rhea" id="RHEA:33099"/>
        <dbReference type="ChEBI" id="CHEBI:15378"/>
        <dbReference type="ChEBI" id="CHEBI:45725"/>
        <dbReference type="ChEBI" id="CHEBI:57287"/>
        <dbReference type="ChEBI" id="CHEBI:57288"/>
        <dbReference type="ChEBI" id="CHEBI:58101"/>
        <dbReference type="EC" id="2.3.1.57"/>
    </reaction>
    <physiologicalReaction direction="left-to-right" evidence="4 7">
        <dbReference type="Rhea" id="RHEA:33100"/>
    </physiologicalReaction>
</comment>
<comment type="biophysicochemical properties">
    <kinetics>
        <KM evidence="7">3.8 uM for acetyl-coenzyme A</KM>
        <KM evidence="7">5.7 uM for spermine</KM>
        <KM evidence="4">3.7 uM for spermine</KM>
        <KM evidence="7">22 uM for spermidine</KM>
        <KM evidence="4">58 uM for spermidine</KM>
        <text evidence="4">kcat is 8.7 sec(-1) with spermidine as substrate (PubMed:15283699). kcat is 5 sec(-1) with spermine as substrate (PubMed:15283699).</text>
    </kinetics>
    <phDependence>
        <text evidence="7">Optimum pH is 8.0.</text>
    </phDependence>
</comment>
<comment type="pathway">
    <text evidence="5 7">Amine and polyamine degradation; putrescine degradation; N-acetylputrescine from putrescine: step 1/1.</text>
</comment>
<comment type="subunit">
    <text evidence="5 6 7">Homodimer.</text>
</comment>
<comment type="interaction">
    <interactant intactId="EBI-711613">
        <id>P21673</id>
    </interactant>
    <interactant intactId="EBI-2824666">
        <id>Q6UXT9</id>
        <label>ABHD15</label>
    </interactant>
    <organismsDiffer>false</organismsDiffer>
    <experiments>3</experiments>
</comment>
<comment type="interaction">
    <interactant intactId="EBI-711613">
        <id>P21673</id>
    </interactant>
    <interactant intactId="EBI-77613">
        <id>P05067</id>
        <label>APP</label>
    </interactant>
    <organismsDiffer>false</organismsDiffer>
    <experiments>3</experiments>
</comment>
<comment type="interaction">
    <interactant intactId="EBI-711613">
        <id>P21673</id>
    </interactant>
    <interactant intactId="EBI-17508719">
        <id>Q7RTU4</id>
        <label>BHLHA9</label>
    </interactant>
    <organismsDiffer>false</organismsDiffer>
    <experiments>3</experiments>
</comment>
<comment type="interaction">
    <interactant intactId="EBI-711613">
        <id>P21673</id>
    </interactant>
    <interactant intactId="EBI-741214">
        <id>Q9UFG5</id>
        <label>C19orf25</label>
    </interactant>
    <organismsDiffer>false</organismsDiffer>
    <experiments>3</experiments>
</comment>
<comment type="interaction">
    <interactant intactId="EBI-711613">
        <id>P21673</id>
    </interactant>
    <interactant intactId="EBI-523958">
        <id>P55210</id>
        <label>CASP7</label>
    </interactant>
    <organismsDiffer>false</organismsDiffer>
    <experiments>6</experiments>
</comment>
<comment type="interaction">
    <interactant intactId="EBI-711613">
        <id>P21673</id>
    </interactant>
    <interactant intactId="EBI-2349862">
        <id>Q8NFR7</id>
        <label>CCDC148</label>
    </interactant>
    <organismsDiffer>false</organismsDiffer>
    <experiments>5</experiments>
</comment>
<comment type="interaction">
    <interactant intactId="EBI-711613">
        <id>P21673</id>
    </interactant>
    <interactant intactId="EBI-10175300">
        <id>Q8TD31-3</id>
        <label>CCHCR1</label>
    </interactant>
    <organismsDiffer>false</organismsDiffer>
    <experiments>6</experiments>
</comment>
<comment type="interaction">
    <interactant intactId="EBI-711613">
        <id>P21673</id>
    </interactant>
    <interactant intactId="EBI-11027409">
        <id>Q00587-2</id>
        <label>CDC42EP1</label>
    </interactant>
    <organismsDiffer>false</organismsDiffer>
    <experiments>3</experiments>
</comment>
<comment type="interaction">
    <interactant intactId="EBI-711613">
        <id>P21673</id>
    </interactant>
    <interactant intactId="EBI-715040">
        <id>P09669</id>
        <label>COX6C</label>
    </interactant>
    <organismsDiffer>false</organismsDiffer>
    <experiments>3</experiments>
</comment>
<comment type="interaction">
    <interactant intactId="EBI-711613">
        <id>P21673</id>
    </interactant>
    <interactant intactId="EBI-348253">
        <id>O00148</id>
        <label>DDX39A</label>
    </interactant>
    <organismsDiffer>false</organismsDiffer>
    <experiments>3</experiments>
</comment>
<comment type="interaction">
    <interactant intactId="EBI-711613">
        <id>P21673</id>
    </interactant>
    <interactant intactId="EBI-721274">
        <id>Q5VUD6</id>
        <label>DIPK1B</label>
    </interactant>
    <organismsDiffer>false</organismsDiffer>
    <experiments>6</experiments>
</comment>
<comment type="interaction">
    <interactant intactId="EBI-711613">
        <id>P21673</id>
    </interactant>
    <interactant intactId="EBI-9679045">
        <id>Q9NQL9</id>
        <label>DMRT3</label>
    </interactant>
    <organismsDiffer>false</organismsDiffer>
    <experiments>6</experiments>
</comment>
<comment type="interaction">
    <interactant intactId="EBI-711613">
        <id>P21673</id>
    </interactant>
    <interactant intactId="EBI-353818">
        <id>O15371</id>
        <label>EIF3D</label>
    </interactant>
    <organismsDiffer>false</organismsDiffer>
    <experiments>3</experiments>
</comment>
<comment type="interaction">
    <interactant intactId="EBI-711613">
        <id>P21673</id>
    </interactant>
    <interactant intactId="EBI-749727">
        <id>Q8NDB6</id>
        <label>FAM156A</label>
    </interactant>
    <organismsDiffer>false</organismsDiffer>
    <experiments>3</experiments>
</comment>
<comment type="interaction">
    <interactant intactId="EBI-711613">
        <id>P21673</id>
    </interactant>
    <interactant intactId="EBI-12958227">
        <id>Q86W67</id>
        <label>FAM228A</label>
    </interactant>
    <organismsDiffer>false</organismsDiffer>
    <experiments>3</experiments>
</comment>
<comment type="interaction">
    <interactant intactId="EBI-711613">
        <id>P21673</id>
    </interactant>
    <interactant intactId="EBI-12845222">
        <id>Q9NVL1-2</id>
        <label>FAM86C1P</label>
    </interactant>
    <organismsDiffer>false</organismsDiffer>
    <experiments>3</experiments>
</comment>
<comment type="interaction">
    <interactant intactId="EBI-711613">
        <id>P21673</id>
    </interactant>
    <interactant intactId="EBI-1050358">
        <id>P07954</id>
        <label>FH</label>
    </interactant>
    <organismsDiffer>false</organismsDiffer>
    <experiments>3</experiments>
</comment>
<comment type="interaction">
    <interactant intactId="EBI-711613">
        <id>P21673</id>
    </interactant>
    <interactant intactId="EBI-7960826">
        <id>Q8NHY3</id>
        <label>GAS2L2</label>
    </interactant>
    <organismsDiffer>false</organismsDiffer>
    <experiments>3</experiments>
</comment>
<comment type="interaction">
    <interactant intactId="EBI-711613">
        <id>P21673</id>
    </interactant>
    <interactant intactId="EBI-745290">
        <id>P17482</id>
        <label>HOXB9</label>
    </interactant>
    <organismsDiffer>false</organismsDiffer>
    <experiments>6</experiments>
</comment>
<comment type="interaction">
    <interactant intactId="EBI-711613">
        <id>P21673</id>
    </interactant>
    <interactant intactId="EBI-631235">
        <id>P22459</id>
        <label>KCNA4</label>
    </interactant>
    <organismsDiffer>false</organismsDiffer>
    <experiments>4</experiments>
</comment>
<comment type="interaction">
    <interactant intactId="EBI-711613">
        <id>P21673</id>
    </interactant>
    <interactant intactId="EBI-9089060">
        <id>Q7Z7F0-4</id>
        <label>KHDC4</label>
    </interactant>
    <organismsDiffer>false</organismsDiffer>
    <experiments>3</experiments>
</comment>
<comment type="interaction">
    <interactant intactId="EBI-711613">
        <id>P21673</id>
    </interactant>
    <interactant intactId="EBI-12039345">
        <id>Q9UBR4-2</id>
        <label>LHX3</label>
    </interactant>
    <organismsDiffer>false</organismsDiffer>
    <experiments>5</experiments>
</comment>
<comment type="interaction">
    <interactant intactId="EBI-711613">
        <id>P21673</id>
    </interactant>
    <interactant intactId="EBI-739832">
        <id>Q8TBB1</id>
        <label>LNX1</label>
    </interactant>
    <organismsDiffer>false</organismsDiffer>
    <experiments>8</experiments>
</comment>
<comment type="interaction">
    <interactant intactId="EBI-711613">
        <id>P21673</id>
    </interactant>
    <interactant intactId="EBI-13943106">
        <id>Q5U5X0</id>
        <label>LYRM7</label>
    </interactant>
    <organismsDiffer>false</organismsDiffer>
    <experiments>3</experiments>
</comment>
<comment type="interaction">
    <interactant intactId="EBI-711613">
        <id>P21673</id>
    </interactant>
    <interactant intactId="EBI-16439278">
        <id>Q6FHY5</id>
        <label>MEOX2</label>
    </interactant>
    <organismsDiffer>false</organismsDiffer>
    <experiments>3</experiments>
</comment>
<comment type="interaction">
    <interactant intactId="EBI-711613">
        <id>P21673</id>
    </interactant>
    <interactant intactId="EBI-358272">
        <id>P52815</id>
        <label>MRPL12</label>
    </interactant>
    <organismsDiffer>false</organismsDiffer>
    <experiments>3</experiments>
</comment>
<comment type="interaction">
    <interactant intactId="EBI-711613">
        <id>P21673</id>
    </interactant>
    <interactant intactId="EBI-714236">
        <id>Q13330</id>
        <label>MTA1</label>
    </interactant>
    <organismsDiffer>false</organismsDiffer>
    <experiments>3</experiments>
</comment>
<comment type="interaction">
    <interactant intactId="EBI-711613">
        <id>P21673</id>
    </interactant>
    <interactant intactId="EBI-2858213">
        <id>Q86VE0</id>
        <label>MYPOP</label>
    </interactant>
    <organismsDiffer>false</organismsDiffer>
    <experiments>3</experiments>
</comment>
<comment type="interaction">
    <interactant intactId="EBI-711613">
        <id>P21673</id>
    </interactant>
    <interactant intactId="EBI-740897">
        <id>Q9GZT8</id>
        <label>NIF3L1</label>
    </interactant>
    <organismsDiffer>false</organismsDiffer>
    <experiments>5</experiments>
</comment>
<comment type="interaction">
    <interactant intactId="EBI-711613">
        <id>P21673</id>
    </interactant>
    <interactant intactId="EBI-741158">
        <id>Q96HA8</id>
        <label>NTAQ1</label>
    </interactant>
    <organismsDiffer>false</organismsDiffer>
    <experiments>3</experiments>
</comment>
<comment type="interaction">
    <interactant intactId="EBI-711613">
        <id>P21673</id>
    </interactant>
    <interactant intactId="EBI-359352">
        <id>P25786</id>
        <label>PSMA1</label>
    </interactant>
    <organismsDiffer>false</organismsDiffer>
    <experiments>3</experiments>
</comment>
<comment type="interaction">
    <interactant intactId="EBI-711613">
        <id>P21673</id>
    </interactant>
    <interactant intactId="EBI-740272">
        <id>Q96I25</id>
        <label>RBM17</label>
    </interactant>
    <organismsDiffer>false</organismsDiffer>
    <experiments>13</experiments>
</comment>
<comment type="interaction">
    <interactant intactId="EBI-711613">
        <id>P21673</id>
    </interactant>
    <interactant intactId="EBI-307352">
        <id>Q04864</id>
        <label>REL</label>
    </interactant>
    <organismsDiffer>false</organismsDiffer>
    <experiments>3</experiments>
</comment>
<comment type="interaction">
    <interactant intactId="EBI-711613">
        <id>P21673</id>
    </interactant>
    <interactant intactId="EBI-366570">
        <id>Q9BUL9</id>
        <label>RPP25</label>
    </interactant>
    <organismsDiffer>false</organismsDiffer>
    <experiments>8</experiments>
</comment>
<comment type="interaction">
    <interactant intactId="EBI-711613">
        <id>P21673</id>
    </interactant>
    <interactant intactId="EBI-711613">
        <id>P21673</id>
        <label>SAT1</label>
    </interactant>
    <organismsDiffer>false</organismsDiffer>
    <experiments>4</experiments>
</comment>
<comment type="interaction">
    <interactant intactId="EBI-711613">
        <id>P21673</id>
    </interactant>
    <interactant intactId="EBI-748746">
        <id>Q96F10</id>
        <label>SAT2</label>
    </interactant>
    <organismsDiffer>false</organismsDiffer>
    <experiments>6</experiments>
</comment>
<comment type="interaction">
    <interactant intactId="EBI-711613">
        <id>P21673</id>
    </interactant>
    <interactant intactId="EBI-9876238">
        <id>O43623</id>
        <label>SNAI2</label>
    </interactant>
    <organismsDiffer>false</organismsDiffer>
    <experiments>3</experiments>
</comment>
<comment type="interaction">
    <interactant intactId="EBI-711613">
        <id>P21673</id>
    </interactant>
    <interactant intactId="EBI-18115728">
        <id>Q6ZNM6</id>
        <label>SPMIP10</label>
    </interactant>
    <organismsDiffer>false</organismsDiffer>
    <experiments>3</experiments>
</comment>
<comment type="interaction">
    <interactant intactId="EBI-711613">
        <id>P21673</id>
    </interactant>
    <interactant intactId="EBI-747797">
        <id>Q9BSH4</id>
        <label>TACO1</label>
    </interactant>
    <organismsDiffer>false</organismsDiffer>
    <experiments>4</experiments>
</comment>
<comment type="interaction">
    <interactant intactId="EBI-711613">
        <id>P21673</id>
    </interactant>
    <interactant intactId="EBI-745182">
        <id>Q9BQ70</id>
        <label>TCF25</label>
    </interactant>
    <organismsDiffer>false</organismsDiffer>
    <experiments>11</experiments>
</comment>
<comment type="interaction">
    <interactant intactId="EBI-711613">
        <id>P21673</id>
    </interactant>
    <interactant intactId="EBI-747736">
        <id>Q15561</id>
        <label>TEAD4</label>
    </interactant>
    <organismsDiffer>false</organismsDiffer>
    <experiments>3</experiments>
</comment>
<comment type="interaction">
    <interactant intactId="EBI-711613">
        <id>P21673</id>
    </interactant>
    <interactant intactId="EBI-11741437">
        <id>Q08117-2</id>
        <label>TLE5</label>
    </interactant>
    <organismsDiffer>false</organismsDiffer>
    <experiments>3</experiments>
</comment>
<comment type="interaction">
    <interactant intactId="EBI-711613">
        <id>P21673</id>
    </interactant>
    <interactant intactId="EBI-746692">
        <id>P19237</id>
        <label>TNNI1</label>
    </interactant>
    <organismsDiffer>false</organismsDiffer>
    <experiments>3</experiments>
</comment>
<comment type="interaction">
    <interactant intactId="EBI-711613">
        <id>P21673</id>
    </interactant>
    <interactant intactId="EBI-2932492">
        <id>Q99757</id>
        <label>TXN2</label>
    </interactant>
    <organismsDiffer>false</organismsDiffer>
    <experiments>3</experiments>
</comment>
<comment type="interaction">
    <interactant intactId="EBI-711613">
        <id>P21673</id>
    </interactant>
    <interactant intactId="EBI-739895">
        <id>Q8N6Y0</id>
        <label>USHBP1</label>
    </interactant>
    <organismsDiffer>false</organismsDiffer>
    <experiments>3</experiments>
</comment>
<comment type="subcellular location">
    <subcellularLocation>
        <location evidence="13 14">Cytoplasm</location>
        <location evidence="13 14">Cytosol</location>
    </subcellularLocation>
</comment>
<comment type="disease">
    <text evidence="3">Overexpression of SAT1 and the consequent putrescine accumulation might play a role in the pathogenesis of keratosis follicularis spinulosa decalvans.</text>
</comment>
<comment type="similarity">
    <text evidence="11">Belongs to the acetyltransferase family.</text>
</comment>
<dbReference type="EC" id="2.3.1.57" evidence="4 5 7"/>
<dbReference type="EMBL" id="M77693">
    <property type="protein sequence ID" value="AAA60573.1"/>
    <property type="molecule type" value="mRNA"/>
</dbReference>
<dbReference type="EMBL" id="M55580">
    <property type="protein sequence ID" value="AAA63260.1"/>
    <property type="molecule type" value="mRNA"/>
</dbReference>
<dbReference type="EMBL" id="Z14136">
    <property type="protein sequence ID" value="CAA78509.1"/>
    <property type="molecule type" value="Genomic_DNA"/>
</dbReference>
<dbReference type="EMBL" id="U40369">
    <property type="protein sequence ID" value="AAA98854.1"/>
    <property type="molecule type" value="Genomic_DNA"/>
</dbReference>
<dbReference type="EMBL" id="BT006825">
    <property type="protein sequence ID" value="AAP35471.1"/>
    <property type="molecule type" value="mRNA"/>
</dbReference>
<dbReference type="EMBL" id="CR450294">
    <property type="protein sequence ID" value="CAG29290.1"/>
    <property type="molecule type" value="mRNA"/>
</dbReference>
<dbReference type="EMBL" id="AK312162">
    <property type="protein sequence ID" value="BAG35096.1"/>
    <property type="molecule type" value="mRNA"/>
</dbReference>
<dbReference type="EMBL" id="CH471074">
    <property type="protein sequence ID" value="EAW99000.1"/>
    <property type="molecule type" value="Genomic_DNA"/>
</dbReference>
<dbReference type="EMBL" id="BC002503">
    <property type="protein sequence ID" value="AAH02503.1"/>
    <property type="molecule type" value="mRNA"/>
</dbReference>
<dbReference type="EMBL" id="BC008424">
    <property type="protein sequence ID" value="AAH08424.1"/>
    <property type="molecule type" value="mRNA"/>
</dbReference>
<dbReference type="CCDS" id="CCDS14207.1"/>
<dbReference type="PIR" id="JH0783">
    <property type="entry name" value="JH0783"/>
</dbReference>
<dbReference type="RefSeq" id="NP_002961.1">
    <property type="nucleotide sequence ID" value="NM_002970.4"/>
</dbReference>
<dbReference type="PDB" id="2B3U">
    <property type="method" value="X-ray"/>
    <property type="resolution" value="1.85 A"/>
    <property type="chains" value="A/B=1-171"/>
</dbReference>
<dbReference type="PDB" id="2B3V">
    <property type="method" value="X-ray"/>
    <property type="resolution" value="1.95 A"/>
    <property type="chains" value="A=1-171"/>
</dbReference>
<dbReference type="PDB" id="2B4B">
    <property type="method" value="X-ray"/>
    <property type="resolution" value="2.00 A"/>
    <property type="chains" value="A/B=1-171"/>
</dbReference>
<dbReference type="PDB" id="2B4D">
    <property type="method" value="X-ray"/>
    <property type="resolution" value="2.00 A"/>
    <property type="chains" value="A/B=1-171"/>
</dbReference>
<dbReference type="PDB" id="2B58">
    <property type="method" value="X-ray"/>
    <property type="resolution" value="1.95 A"/>
    <property type="chains" value="A=1-171"/>
</dbReference>
<dbReference type="PDB" id="2B5G">
    <property type="method" value="X-ray"/>
    <property type="resolution" value="1.70 A"/>
    <property type="chains" value="A/B=1-171"/>
</dbReference>
<dbReference type="PDB" id="2F5I">
    <property type="method" value="X-ray"/>
    <property type="resolution" value="2.30 A"/>
    <property type="chains" value="A/B=1-171"/>
</dbReference>
<dbReference type="PDB" id="2FXF">
    <property type="method" value="X-ray"/>
    <property type="resolution" value="2.00 A"/>
    <property type="chains" value="A/B=2-171"/>
</dbReference>
<dbReference type="PDB" id="2G3T">
    <property type="method" value="X-ray"/>
    <property type="resolution" value="1.80 A"/>
    <property type="chains" value="A/B=1-171"/>
</dbReference>
<dbReference type="PDB" id="2JEV">
    <property type="method" value="X-ray"/>
    <property type="resolution" value="2.30 A"/>
    <property type="chains" value="A/B=1-171"/>
</dbReference>
<dbReference type="PDBsum" id="2B3U"/>
<dbReference type="PDBsum" id="2B3V"/>
<dbReference type="PDBsum" id="2B4B"/>
<dbReference type="PDBsum" id="2B4D"/>
<dbReference type="PDBsum" id="2B58"/>
<dbReference type="PDBsum" id="2B5G"/>
<dbReference type="PDBsum" id="2F5I"/>
<dbReference type="PDBsum" id="2FXF"/>
<dbReference type="PDBsum" id="2G3T"/>
<dbReference type="PDBsum" id="2JEV"/>
<dbReference type="SMR" id="P21673"/>
<dbReference type="BioGRID" id="112210">
    <property type="interactions" value="103"/>
</dbReference>
<dbReference type="DIP" id="DIP-36801N"/>
<dbReference type="FunCoup" id="P21673">
    <property type="interactions" value="671"/>
</dbReference>
<dbReference type="IntAct" id="P21673">
    <property type="interactions" value="93"/>
</dbReference>
<dbReference type="MINT" id="P21673"/>
<dbReference type="STRING" id="9606.ENSP00000368572"/>
<dbReference type="BindingDB" id="P21673"/>
<dbReference type="ChEMBL" id="CHEMBL4286"/>
<dbReference type="DrugBank" id="DB04633">
    <property type="generic name" value="N-ethyl-N-[3-(propylamino)propyl]propane-1,3-diamine"/>
</dbReference>
<dbReference type="DrugBank" id="DB00127">
    <property type="generic name" value="Spermine"/>
</dbReference>
<dbReference type="DrugBank" id="DB06824">
    <property type="generic name" value="Triethylenetetramine"/>
</dbReference>
<dbReference type="DrugCentral" id="P21673"/>
<dbReference type="iPTMnet" id="P21673"/>
<dbReference type="PhosphoSitePlus" id="P21673"/>
<dbReference type="BioMuta" id="SAT1"/>
<dbReference type="DMDM" id="114322"/>
<dbReference type="MassIVE" id="P21673"/>
<dbReference type="PaxDb" id="9606-ENSP00000368572"/>
<dbReference type="PeptideAtlas" id="P21673"/>
<dbReference type="ProteomicsDB" id="53885"/>
<dbReference type="Antibodypedia" id="24525">
    <property type="antibodies" value="238 antibodies from 22 providers"/>
</dbReference>
<dbReference type="DNASU" id="6303"/>
<dbReference type="Ensembl" id="ENST00000379270.5">
    <property type="protein sequence ID" value="ENSP00000368572.4"/>
    <property type="gene ID" value="ENSG00000130066.17"/>
</dbReference>
<dbReference type="GeneID" id="6303"/>
<dbReference type="KEGG" id="hsa:6303"/>
<dbReference type="MANE-Select" id="ENST00000379270.5">
    <property type="protein sequence ID" value="ENSP00000368572.4"/>
    <property type="RefSeq nucleotide sequence ID" value="NM_002970.4"/>
    <property type="RefSeq protein sequence ID" value="NP_002961.1"/>
</dbReference>
<dbReference type="UCSC" id="uc004dau.5">
    <property type="organism name" value="human"/>
</dbReference>
<dbReference type="AGR" id="HGNC:10540"/>
<dbReference type="CTD" id="6303"/>
<dbReference type="DisGeNET" id="6303"/>
<dbReference type="GeneCards" id="SAT1"/>
<dbReference type="HGNC" id="HGNC:10540">
    <property type="gene designation" value="SAT1"/>
</dbReference>
<dbReference type="HPA" id="ENSG00000130066">
    <property type="expression patterns" value="Low tissue specificity"/>
</dbReference>
<dbReference type="MalaCards" id="SAT1"/>
<dbReference type="MIM" id="313020">
    <property type="type" value="gene"/>
</dbReference>
<dbReference type="neXtProt" id="NX_P21673"/>
<dbReference type="OpenTargets" id="ENSG00000130066"/>
<dbReference type="Orphanet" id="2340">
    <property type="disease" value="Keratosis follicularis spinulosa decalvans"/>
</dbReference>
<dbReference type="Orphanet" id="93552">
    <property type="disease" value="Pediatric systemic lupus erythematosus"/>
</dbReference>
<dbReference type="PharmGKB" id="PA162402389"/>
<dbReference type="VEuPathDB" id="HostDB:ENSG00000130066"/>
<dbReference type="eggNOG" id="KOG3216">
    <property type="taxonomic scope" value="Eukaryota"/>
</dbReference>
<dbReference type="GeneTree" id="ENSGT00950000183121"/>
<dbReference type="HOGENOM" id="CLU_013985_41_1_1"/>
<dbReference type="InParanoid" id="P21673"/>
<dbReference type="OMA" id="IAVKCRC"/>
<dbReference type="OrthoDB" id="7305308at2759"/>
<dbReference type="PAN-GO" id="P21673">
    <property type="GO annotations" value="4 GO annotations based on evolutionary models"/>
</dbReference>
<dbReference type="PhylomeDB" id="P21673"/>
<dbReference type="TreeFam" id="TF319736"/>
<dbReference type="BioCyc" id="MetaCyc:HS05339-MONOMER"/>
<dbReference type="BRENDA" id="2.3.1.57">
    <property type="organism ID" value="2681"/>
</dbReference>
<dbReference type="PathwayCommons" id="P21673"/>
<dbReference type="Reactome" id="R-HSA-351200">
    <property type="pathway name" value="Interconversion of polyamines"/>
</dbReference>
<dbReference type="SignaLink" id="P21673"/>
<dbReference type="SIGNOR" id="P21673"/>
<dbReference type="UniPathway" id="UPA00188">
    <property type="reaction ID" value="UER00363"/>
</dbReference>
<dbReference type="BioGRID-ORCS" id="6303">
    <property type="hits" value="21 hits in 788 CRISPR screens"/>
</dbReference>
<dbReference type="ChiTaRS" id="SAT1">
    <property type="organism name" value="human"/>
</dbReference>
<dbReference type="EvolutionaryTrace" id="P21673"/>
<dbReference type="GeneWiki" id="SAT1_(gene)"/>
<dbReference type="GenomeRNAi" id="6303"/>
<dbReference type="Pharos" id="P21673">
    <property type="development level" value="Tbio"/>
</dbReference>
<dbReference type="PRO" id="PR:P21673"/>
<dbReference type="Proteomes" id="UP000005640">
    <property type="component" value="Chromosome X"/>
</dbReference>
<dbReference type="RNAct" id="P21673">
    <property type="molecule type" value="protein"/>
</dbReference>
<dbReference type="Bgee" id="ENSG00000130066">
    <property type="expression patterns" value="Expressed in nasal cavity epithelium and 205 other cell types or tissues"/>
</dbReference>
<dbReference type="ExpressionAtlas" id="P21673">
    <property type="expression patterns" value="baseline and differential"/>
</dbReference>
<dbReference type="GO" id="GO:0005829">
    <property type="term" value="C:cytosol"/>
    <property type="evidence" value="ECO:0000304"/>
    <property type="project" value="Reactome"/>
</dbReference>
<dbReference type="GO" id="GO:0004145">
    <property type="term" value="F:diamine N-acetyltransferase activity"/>
    <property type="evidence" value="ECO:0000314"/>
    <property type="project" value="UniProtKB"/>
</dbReference>
<dbReference type="GO" id="GO:0042802">
    <property type="term" value="F:identical protein binding"/>
    <property type="evidence" value="ECO:0000353"/>
    <property type="project" value="IntAct"/>
</dbReference>
<dbReference type="GO" id="GO:0008080">
    <property type="term" value="F:N-acetyltransferase activity"/>
    <property type="evidence" value="ECO:0000314"/>
    <property type="project" value="UniProtKB"/>
</dbReference>
<dbReference type="GO" id="GO:0019809">
    <property type="term" value="F:spermidine binding"/>
    <property type="evidence" value="ECO:0000318"/>
    <property type="project" value="GO_Central"/>
</dbReference>
<dbReference type="GO" id="GO:0001525">
    <property type="term" value="P:angiogenesis"/>
    <property type="evidence" value="ECO:0000270"/>
    <property type="project" value="UniProtKB"/>
</dbReference>
<dbReference type="GO" id="GO:0006596">
    <property type="term" value="P:polyamine biosynthetic process"/>
    <property type="evidence" value="ECO:0000314"/>
    <property type="project" value="UniProtKB"/>
</dbReference>
<dbReference type="GO" id="GO:0009447">
    <property type="term" value="P:putrescine catabolic process"/>
    <property type="evidence" value="ECO:0007669"/>
    <property type="project" value="UniProtKB-UniPathway"/>
</dbReference>
<dbReference type="GO" id="GO:0042127">
    <property type="term" value="P:regulation of cell population proliferation"/>
    <property type="evidence" value="ECO:0007669"/>
    <property type="project" value="Ensembl"/>
</dbReference>
<dbReference type="GO" id="GO:0032918">
    <property type="term" value="P:spermidine acetylation"/>
    <property type="evidence" value="ECO:0000314"/>
    <property type="project" value="UniProtKB"/>
</dbReference>
<dbReference type="CDD" id="cd04301">
    <property type="entry name" value="NAT_SF"/>
    <property type="match status" value="1"/>
</dbReference>
<dbReference type="FunFam" id="3.40.630.30:FF:000011">
    <property type="entry name" value="Diamine acetyltransferase 1"/>
    <property type="match status" value="1"/>
</dbReference>
<dbReference type="Gene3D" id="3.40.630.30">
    <property type="match status" value="1"/>
</dbReference>
<dbReference type="InterPro" id="IPR016181">
    <property type="entry name" value="Acyl_CoA_acyltransferase"/>
</dbReference>
<dbReference type="InterPro" id="IPR051016">
    <property type="entry name" value="Diverse_Substrate_AcTransf"/>
</dbReference>
<dbReference type="InterPro" id="IPR000182">
    <property type="entry name" value="GNAT_dom"/>
</dbReference>
<dbReference type="PANTHER" id="PTHR10545:SF36">
    <property type="entry name" value="DIAMINE ACETYLTRANSFERASE 1"/>
    <property type="match status" value="1"/>
</dbReference>
<dbReference type="PANTHER" id="PTHR10545">
    <property type="entry name" value="DIAMINE N-ACETYLTRANSFERASE"/>
    <property type="match status" value="1"/>
</dbReference>
<dbReference type="Pfam" id="PF00583">
    <property type="entry name" value="Acetyltransf_1"/>
    <property type="match status" value="1"/>
</dbReference>
<dbReference type="SUPFAM" id="SSF55729">
    <property type="entry name" value="Acyl-CoA N-acyltransferases (Nat)"/>
    <property type="match status" value="1"/>
</dbReference>
<dbReference type="PROSITE" id="PS51186">
    <property type="entry name" value="GNAT"/>
    <property type="match status" value="1"/>
</dbReference>
<evidence type="ECO:0000250" key="1">
    <source>
        <dbReference type="UniProtKB" id="P0A951"/>
    </source>
</evidence>
<evidence type="ECO:0000255" key="2">
    <source>
        <dbReference type="PROSITE-ProRule" id="PRU00532"/>
    </source>
</evidence>
<evidence type="ECO:0000269" key="3">
    <source>
    </source>
</evidence>
<evidence type="ECO:0000269" key="4">
    <source>
    </source>
</evidence>
<evidence type="ECO:0000269" key="5">
    <source>
    </source>
</evidence>
<evidence type="ECO:0000269" key="6">
    <source>
    </source>
</evidence>
<evidence type="ECO:0000269" key="7">
    <source>
    </source>
</evidence>
<evidence type="ECO:0000303" key="8">
    <source>
    </source>
</evidence>
<evidence type="ECO:0000303" key="9">
    <source>
    </source>
</evidence>
<evidence type="ECO:0000303" key="10">
    <source>
    </source>
</evidence>
<evidence type="ECO:0000305" key="11"/>
<evidence type="ECO:0000305" key="12">
    <source>
    </source>
</evidence>
<evidence type="ECO:0000305" key="13">
    <source>
    </source>
</evidence>
<evidence type="ECO:0000305" key="14">
    <source>
    </source>
</evidence>
<evidence type="ECO:0000312" key="15">
    <source>
        <dbReference type="HGNC" id="HGNC:10540"/>
    </source>
</evidence>
<evidence type="ECO:0007829" key="16">
    <source>
        <dbReference type="PDB" id="2B5G"/>
    </source>
</evidence>
<evidence type="ECO:0007829" key="17">
    <source>
        <dbReference type="PDB" id="2G3T"/>
    </source>
</evidence>
<gene>
    <name evidence="15" type="primary">SAT1</name>
    <name type="synonym">SAT</name>
</gene>